<protein>
    <recommendedName>
        <fullName>BAG family molecular chaperone regulator 3</fullName>
    </recommendedName>
    <alternativeName>
        <fullName>Bcl-2-associated athanogene 3</fullName>
    </alternativeName>
</protein>
<feature type="chain" id="PRO_0000415523" description="BAG family molecular chaperone regulator 3">
    <location>
        <begin position="1"/>
        <end position="303"/>
    </location>
</feature>
<feature type="domain" description="Ubiquitin-like" evidence="3">
    <location>
        <begin position="45"/>
        <end position="119"/>
    </location>
</feature>
<feature type="domain" description="BAG" evidence="4">
    <location>
        <begin position="138"/>
        <end position="216"/>
    </location>
</feature>
<feature type="region of interest" description="Disordered" evidence="5">
    <location>
        <begin position="1"/>
        <end position="27"/>
    </location>
</feature>
<feature type="region of interest" description="Disordered" evidence="5">
    <location>
        <begin position="249"/>
        <end position="268"/>
    </location>
</feature>
<feature type="compositionally biased region" description="Polar residues" evidence="5">
    <location>
        <begin position="1"/>
        <end position="11"/>
    </location>
</feature>
<feature type="compositionally biased region" description="Polar residues" evidence="5">
    <location>
        <begin position="258"/>
        <end position="267"/>
    </location>
</feature>
<feature type="modified residue" description="Phosphoserine" evidence="2">
    <location>
        <position position="263"/>
    </location>
</feature>
<feature type="sequence conflict" description="In Ref. 4; AAM61448." evidence="7" ref="4">
    <original>F</original>
    <variation>I</variation>
    <location>
        <position position="45"/>
    </location>
</feature>
<feature type="helix" evidence="8">
    <location>
        <begin position="135"/>
        <end position="161"/>
    </location>
</feature>
<feature type="helix" evidence="8">
    <location>
        <begin position="168"/>
        <end position="189"/>
    </location>
</feature>
<feature type="turn" evidence="8">
    <location>
        <begin position="190"/>
        <end position="192"/>
    </location>
</feature>
<feature type="helix" evidence="8">
    <location>
        <begin position="194"/>
        <end position="218"/>
    </location>
</feature>
<gene>
    <name type="primary">BAG3</name>
    <name type="ordered locus">At5g07220</name>
    <name type="ORF">T28J14_160</name>
</gene>
<keyword id="KW-0002">3D-structure</keyword>
<keyword id="KW-0143">Chaperone</keyword>
<keyword id="KW-0597">Phosphoprotein</keyword>
<keyword id="KW-1185">Reference proteome</keyword>
<sequence length="303" mass="34244">MMKMNTGTSPSVIGGGTSGNEWESRPGGMVVQRRTDQNSDVPRVFRVRVKYGSVYHEININSQSSFGELKKMLSDQVGLHHEDMKVLYKDKERDSKMFLDLCGVKDRSKLVVKEDPISQEKRLLAKRKNAAIEKASKSISDISFEVDRLAGQVSAFETVINKGGKVEEKSLVNLIEMLMNQLLRLDAIIADGDVKLMRKMQVQRVQKYVEALDLLKVKNSAKKVEVNKSVRHKPQTQTRFEQRDLLSFVEEEEEEPRNSNASSSSGTPAVVASKWEMFDSASTAKAAETVKPVPPRFKWEFFD</sequence>
<comment type="function">
    <text evidence="1">Co-chaperone that regulates diverse cellular pathways, such as programmed cell death and stress responses.</text>
</comment>
<comment type="subunit">
    <text evidence="1 6">Binds to the ATPase domain of HSP70/HSC70 chaperones (By similarity). Interacts with HSP70-1.</text>
</comment>
<dbReference type="EMBL" id="AL163652">
    <property type="protein sequence ID" value="CAB87278.1"/>
    <property type="molecule type" value="Genomic_DNA"/>
</dbReference>
<dbReference type="EMBL" id="CP002688">
    <property type="protein sequence ID" value="AED91123.1"/>
    <property type="molecule type" value="Genomic_DNA"/>
</dbReference>
<dbReference type="EMBL" id="AF428411">
    <property type="protein sequence ID" value="AAL16179.1"/>
    <property type="molecule type" value="mRNA"/>
</dbReference>
<dbReference type="EMBL" id="AY084885">
    <property type="protein sequence ID" value="AAM61448.1"/>
    <property type="molecule type" value="mRNA"/>
</dbReference>
<dbReference type="PIR" id="T48493">
    <property type="entry name" value="T48493"/>
</dbReference>
<dbReference type="RefSeq" id="NP_196339.1">
    <property type="nucleotide sequence ID" value="NM_120804.3"/>
</dbReference>
<dbReference type="PDB" id="4HWF">
    <property type="method" value="X-ray"/>
    <property type="resolution" value="2.00 A"/>
    <property type="chains" value="A/B=135-220"/>
</dbReference>
<dbReference type="PDBsum" id="4HWF"/>
<dbReference type="SMR" id="Q9LYP4"/>
<dbReference type="FunCoup" id="Q9LYP4">
    <property type="interactions" value="15"/>
</dbReference>
<dbReference type="IntAct" id="Q9LYP4">
    <property type="interactions" value="1"/>
</dbReference>
<dbReference type="STRING" id="3702.Q9LYP4"/>
<dbReference type="GlyGen" id="Q9LYP4">
    <property type="glycosylation" value="1 site"/>
</dbReference>
<dbReference type="PaxDb" id="3702-AT5G07220.1"/>
<dbReference type="ProteomicsDB" id="240845"/>
<dbReference type="EnsemblPlants" id="AT5G07220.1">
    <property type="protein sequence ID" value="AT5G07220.1"/>
    <property type="gene ID" value="AT5G07220"/>
</dbReference>
<dbReference type="GeneID" id="830613"/>
<dbReference type="Gramene" id="AT5G07220.1">
    <property type="protein sequence ID" value="AT5G07220.1"/>
    <property type="gene ID" value="AT5G07220"/>
</dbReference>
<dbReference type="KEGG" id="ath:AT5G07220"/>
<dbReference type="Araport" id="AT5G07220"/>
<dbReference type="TAIR" id="AT5G07220">
    <property type="gene designation" value="BAG3"/>
</dbReference>
<dbReference type="eggNOG" id="KOG4361">
    <property type="taxonomic scope" value="Eukaryota"/>
</dbReference>
<dbReference type="HOGENOM" id="CLU_043370_1_0_1"/>
<dbReference type="InParanoid" id="Q9LYP4"/>
<dbReference type="OMA" id="ENASAEW"/>
<dbReference type="PhylomeDB" id="Q9LYP4"/>
<dbReference type="EvolutionaryTrace" id="Q9LYP4"/>
<dbReference type="PRO" id="PR:Q9LYP4"/>
<dbReference type="Proteomes" id="UP000006548">
    <property type="component" value="Chromosome 5"/>
</dbReference>
<dbReference type="ExpressionAtlas" id="Q9LYP4">
    <property type="expression patterns" value="baseline and differential"/>
</dbReference>
<dbReference type="GO" id="GO:0005737">
    <property type="term" value="C:cytoplasm"/>
    <property type="evidence" value="ECO:0007669"/>
    <property type="project" value="UniProtKB-ARBA"/>
</dbReference>
<dbReference type="GO" id="GO:0051087">
    <property type="term" value="F:protein-folding chaperone binding"/>
    <property type="evidence" value="ECO:0007669"/>
    <property type="project" value="InterPro"/>
</dbReference>
<dbReference type="FunFam" id="3.10.20.90:FF:000298">
    <property type="entry name" value="BAG family molecular chaperone regulator 1"/>
    <property type="match status" value="1"/>
</dbReference>
<dbReference type="Gene3D" id="1.20.58.120">
    <property type="entry name" value="BAG domain"/>
    <property type="match status" value="1"/>
</dbReference>
<dbReference type="Gene3D" id="3.10.20.90">
    <property type="entry name" value="Phosphatidylinositol 3-kinase Catalytic Subunit, Chain A, domain 1"/>
    <property type="match status" value="1"/>
</dbReference>
<dbReference type="InterPro" id="IPR039773">
    <property type="entry name" value="BAG_chaperone_regulator"/>
</dbReference>
<dbReference type="InterPro" id="IPR036533">
    <property type="entry name" value="BAG_dom_sf"/>
</dbReference>
<dbReference type="InterPro" id="IPR003103">
    <property type="entry name" value="BAG_domain"/>
</dbReference>
<dbReference type="InterPro" id="IPR000626">
    <property type="entry name" value="Ubiquitin-like_dom"/>
</dbReference>
<dbReference type="InterPro" id="IPR029071">
    <property type="entry name" value="Ubiquitin-like_domsf"/>
</dbReference>
<dbReference type="PANTHER" id="PTHR12329:SF50">
    <property type="entry name" value="BAG FAMILY MOLECULAR CHAPERONE REGULATOR 3"/>
    <property type="match status" value="1"/>
</dbReference>
<dbReference type="PANTHER" id="PTHR12329">
    <property type="entry name" value="BCL2-ASSOCIATED ATHANOGENE"/>
    <property type="match status" value="1"/>
</dbReference>
<dbReference type="Pfam" id="PF02179">
    <property type="entry name" value="BAG"/>
    <property type="match status" value="1"/>
</dbReference>
<dbReference type="SMART" id="SM00264">
    <property type="entry name" value="BAG"/>
    <property type="match status" value="1"/>
</dbReference>
<dbReference type="SUPFAM" id="SSF63491">
    <property type="entry name" value="BAG domain"/>
    <property type="match status" value="1"/>
</dbReference>
<dbReference type="SUPFAM" id="SSF54236">
    <property type="entry name" value="Ubiquitin-like"/>
    <property type="match status" value="1"/>
</dbReference>
<dbReference type="PROSITE" id="PS51035">
    <property type="entry name" value="BAG"/>
    <property type="match status" value="1"/>
</dbReference>
<dbReference type="PROSITE" id="PS50053">
    <property type="entry name" value="UBIQUITIN_2"/>
    <property type="match status" value="1"/>
</dbReference>
<reference key="1">
    <citation type="journal article" date="2000" name="Nature">
        <title>Sequence and analysis of chromosome 5 of the plant Arabidopsis thaliana.</title>
        <authorList>
            <person name="Tabata S."/>
            <person name="Kaneko T."/>
            <person name="Nakamura Y."/>
            <person name="Kotani H."/>
            <person name="Kato T."/>
            <person name="Asamizu E."/>
            <person name="Miyajima N."/>
            <person name="Sasamoto S."/>
            <person name="Kimura T."/>
            <person name="Hosouchi T."/>
            <person name="Kawashima K."/>
            <person name="Kohara M."/>
            <person name="Matsumoto M."/>
            <person name="Matsuno A."/>
            <person name="Muraki A."/>
            <person name="Nakayama S."/>
            <person name="Nakazaki N."/>
            <person name="Naruo K."/>
            <person name="Okumura S."/>
            <person name="Shinpo S."/>
            <person name="Takeuchi C."/>
            <person name="Wada T."/>
            <person name="Watanabe A."/>
            <person name="Yamada M."/>
            <person name="Yasuda M."/>
            <person name="Sato S."/>
            <person name="de la Bastide M."/>
            <person name="Huang E."/>
            <person name="Spiegel L."/>
            <person name="Gnoj L."/>
            <person name="O'Shaughnessy A."/>
            <person name="Preston R."/>
            <person name="Habermann K."/>
            <person name="Murray J."/>
            <person name="Johnson D."/>
            <person name="Rohlfing T."/>
            <person name="Nelson J."/>
            <person name="Stoneking T."/>
            <person name="Pepin K."/>
            <person name="Spieth J."/>
            <person name="Sekhon M."/>
            <person name="Armstrong J."/>
            <person name="Becker M."/>
            <person name="Belter E."/>
            <person name="Cordum H."/>
            <person name="Cordes M."/>
            <person name="Courtney L."/>
            <person name="Courtney W."/>
            <person name="Dante M."/>
            <person name="Du H."/>
            <person name="Edwards J."/>
            <person name="Fryman J."/>
            <person name="Haakensen B."/>
            <person name="Lamar E."/>
            <person name="Latreille P."/>
            <person name="Leonard S."/>
            <person name="Meyer R."/>
            <person name="Mulvaney E."/>
            <person name="Ozersky P."/>
            <person name="Riley A."/>
            <person name="Strowmatt C."/>
            <person name="Wagner-McPherson C."/>
            <person name="Wollam A."/>
            <person name="Yoakum M."/>
            <person name="Bell M."/>
            <person name="Dedhia N."/>
            <person name="Parnell L."/>
            <person name="Shah R."/>
            <person name="Rodriguez M."/>
            <person name="Hoon See L."/>
            <person name="Vil D."/>
            <person name="Baker J."/>
            <person name="Kirchoff K."/>
            <person name="Toth K."/>
            <person name="King L."/>
            <person name="Bahret A."/>
            <person name="Miller B."/>
            <person name="Marra M.A."/>
            <person name="Martienssen R."/>
            <person name="McCombie W.R."/>
            <person name="Wilson R.K."/>
            <person name="Murphy G."/>
            <person name="Bancroft I."/>
            <person name="Volckaert G."/>
            <person name="Wambutt R."/>
            <person name="Duesterhoeft A."/>
            <person name="Stiekema W."/>
            <person name="Pohl T."/>
            <person name="Entian K.-D."/>
            <person name="Terryn N."/>
            <person name="Hartley N."/>
            <person name="Bent E."/>
            <person name="Johnson S."/>
            <person name="Langham S.-A."/>
            <person name="McCullagh B."/>
            <person name="Robben J."/>
            <person name="Grymonprez B."/>
            <person name="Zimmermann W."/>
            <person name="Ramsperger U."/>
            <person name="Wedler H."/>
            <person name="Balke K."/>
            <person name="Wedler E."/>
            <person name="Peters S."/>
            <person name="van Staveren M."/>
            <person name="Dirkse W."/>
            <person name="Mooijman P."/>
            <person name="Klein Lankhorst R."/>
            <person name="Weitzenegger T."/>
            <person name="Bothe G."/>
            <person name="Rose M."/>
            <person name="Hauf J."/>
            <person name="Berneiser S."/>
            <person name="Hempel S."/>
            <person name="Feldpausch M."/>
            <person name="Lamberth S."/>
            <person name="Villarroel R."/>
            <person name="Gielen J."/>
            <person name="Ardiles W."/>
            <person name="Bents O."/>
            <person name="Lemcke K."/>
            <person name="Kolesov G."/>
            <person name="Mayer K.F.X."/>
            <person name="Rudd S."/>
            <person name="Schoof H."/>
            <person name="Schueller C."/>
            <person name="Zaccaria P."/>
            <person name="Mewes H.-W."/>
            <person name="Bevan M."/>
            <person name="Fransz P.F."/>
        </authorList>
    </citation>
    <scope>NUCLEOTIDE SEQUENCE [LARGE SCALE GENOMIC DNA]</scope>
    <source>
        <strain>cv. Columbia</strain>
    </source>
</reference>
<reference key="2">
    <citation type="journal article" date="2017" name="Plant J.">
        <title>Araport11: a complete reannotation of the Arabidopsis thaliana reference genome.</title>
        <authorList>
            <person name="Cheng C.Y."/>
            <person name="Krishnakumar V."/>
            <person name="Chan A.P."/>
            <person name="Thibaud-Nissen F."/>
            <person name="Schobel S."/>
            <person name="Town C.D."/>
        </authorList>
    </citation>
    <scope>GENOME REANNOTATION</scope>
    <source>
        <strain>cv. Columbia</strain>
    </source>
</reference>
<reference key="3">
    <citation type="journal article" date="2003" name="Science">
        <title>Empirical analysis of transcriptional activity in the Arabidopsis genome.</title>
        <authorList>
            <person name="Yamada K."/>
            <person name="Lim J."/>
            <person name="Dale J.M."/>
            <person name="Chen H."/>
            <person name="Shinn P."/>
            <person name="Palm C.J."/>
            <person name="Southwick A.M."/>
            <person name="Wu H.C."/>
            <person name="Kim C.J."/>
            <person name="Nguyen M."/>
            <person name="Pham P.K."/>
            <person name="Cheuk R.F."/>
            <person name="Karlin-Newmann G."/>
            <person name="Liu S.X."/>
            <person name="Lam B."/>
            <person name="Sakano H."/>
            <person name="Wu T."/>
            <person name="Yu G."/>
            <person name="Miranda M."/>
            <person name="Quach H.L."/>
            <person name="Tripp M."/>
            <person name="Chang C.H."/>
            <person name="Lee J.M."/>
            <person name="Toriumi M.J."/>
            <person name="Chan M.M."/>
            <person name="Tang C.C."/>
            <person name="Onodera C.S."/>
            <person name="Deng J.M."/>
            <person name="Akiyama K."/>
            <person name="Ansari Y."/>
            <person name="Arakawa T."/>
            <person name="Banh J."/>
            <person name="Banno F."/>
            <person name="Bowser L."/>
            <person name="Brooks S.Y."/>
            <person name="Carninci P."/>
            <person name="Chao Q."/>
            <person name="Choy N."/>
            <person name="Enju A."/>
            <person name="Goldsmith A.D."/>
            <person name="Gurjal M."/>
            <person name="Hansen N.F."/>
            <person name="Hayashizaki Y."/>
            <person name="Johnson-Hopson C."/>
            <person name="Hsuan V.W."/>
            <person name="Iida K."/>
            <person name="Karnes M."/>
            <person name="Khan S."/>
            <person name="Koesema E."/>
            <person name="Ishida J."/>
            <person name="Jiang P.X."/>
            <person name="Jones T."/>
            <person name="Kawai J."/>
            <person name="Kamiya A."/>
            <person name="Meyers C."/>
            <person name="Nakajima M."/>
            <person name="Narusaka M."/>
            <person name="Seki M."/>
            <person name="Sakurai T."/>
            <person name="Satou M."/>
            <person name="Tamse R."/>
            <person name="Vaysberg M."/>
            <person name="Wallender E.K."/>
            <person name="Wong C."/>
            <person name="Yamamura Y."/>
            <person name="Yuan S."/>
            <person name="Shinozaki K."/>
            <person name="Davis R.W."/>
            <person name="Theologis A."/>
            <person name="Ecker J.R."/>
        </authorList>
    </citation>
    <scope>NUCLEOTIDE SEQUENCE [LARGE SCALE MRNA]</scope>
    <source>
        <strain>cv. Columbia</strain>
    </source>
</reference>
<reference key="4">
    <citation type="submission" date="2002-03" db="EMBL/GenBank/DDBJ databases">
        <title>Full-length cDNA from Arabidopsis thaliana.</title>
        <authorList>
            <person name="Brover V.V."/>
            <person name="Troukhan M.E."/>
            <person name="Alexandrov N.A."/>
            <person name="Lu Y.-P."/>
            <person name="Flavell R.B."/>
            <person name="Feldmann K.A."/>
        </authorList>
    </citation>
    <scope>NUCLEOTIDE SEQUENCE [LARGE SCALE MRNA]</scope>
</reference>
<reference key="5">
    <citation type="journal article" date="2003" name="Plant Sci.">
        <title>The BAG-family proteins in Arabidopsis thaliana.</title>
        <authorList>
            <person name="Juqiang Y."/>
            <person name="Cixin H."/>
            <person name="Hong Z."/>
        </authorList>
    </citation>
    <scope>GENE FAMILY</scope>
    <scope>NOMENCLATURE</scope>
</reference>
<reference key="6">
    <citation type="journal article" date="2006" name="Cell Death Differ.">
        <title>AtBAG6, a novel calmodulin-binding protein, induces programmed cell death in yeast and plants.</title>
        <authorList>
            <person name="Kang C.H."/>
            <person name="Jung W.Y."/>
            <person name="Kang Y.H."/>
            <person name="Kim J.Y."/>
            <person name="Kim D.G."/>
            <person name="Jeong J.C."/>
            <person name="Baek D.W."/>
            <person name="Jin J.B."/>
            <person name="Lee J.Y."/>
            <person name="Kim M.O."/>
            <person name="Chung W.S."/>
            <person name="Mengiste T."/>
            <person name="Koiwa H."/>
            <person name="Kwak S.S."/>
            <person name="Bahk J.D."/>
            <person name="Lee S.Y."/>
            <person name="Nam J.S."/>
            <person name="Yun D.J."/>
            <person name="Cho M.J."/>
        </authorList>
    </citation>
    <scope>INTERACTION WITH HSP70-1</scope>
</reference>
<reference key="7">
    <citation type="journal article" date="2006" name="J. Biol. Chem.">
        <title>Identification and functional characterization of the BAG protein family in Arabidopsis thaliana.</title>
        <authorList>
            <person name="Doukhanina E.V."/>
            <person name="Chen S."/>
            <person name="van der Zalm E."/>
            <person name="Godzik A."/>
            <person name="Reed J."/>
            <person name="Dickman M.B."/>
        </authorList>
    </citation>
    <scope>GENE FAMILY</scope>
</reference>
<name>BAG3_ARATH</name>
<accession>Q9LYP4</accession>
<accession>Q8LFF2</accession>
<organism>
    <name type="scientific">Arabidopsis thaliana</name>
    <name type="common">Mouse-ear cress</name>
    <dbReference type="NCBI Taxonomy" id="3702"/>
    <lineage>
        <taxon>Eukaryota</taxon>
        <taxon>Viridiplantae</taxon>
        <taxon>Streptophyta</taxon>
        <taxon>Embryophyta</taxon>
        <taxon>Tracheophyta</taxon>
        <taxon>Spermatophyta</taxon>
        <taxon>Magnoliopsida</taxon>
        <taxon>eudicotyledons</taxon>
        <taxon>Gunneridae</taxon>
        <taxon>Pentapetalae</taxon>
        <taxon>rosids</taxon>
        <taxon>malvids</taxon>
        <taxon>Brassicales</taxon>
        <taxon>Brassicaceae</taxon>
        <taxon>Camelineae</taxon>
        <taxon>Arabidopsis</taxon>
    </lineage>
</organism>
<proteinExistence type="evidence at protein level"/>
<evidence type="ECO:0000250" key="1"/>
<evidence type="ECO:0000250" key="2">
    <source>
        <dbReference type="UniProtKB" id="Q0WUQ1"/>
    </source>
</evidence>
<evidence type="ECO:0000255" key="3">
    <source>
        <dbReference type="PROSITE-ProRule" id="PRU00214"/>
    </source>
</evidence>
<evidence type="ECO:0000255" key="4">
    <source>
        <dbReference type="PROSITE-ProRule" id="PRU00369"/>
    </source>
</evidence>
<evidence type="ECO:0000256" key="5">
    <source>
        <dbReference type="SAM" id="MobiDB-lite"/>
    </source>
</evidence>
<evidence type="ECO:0000269" key="6">
    <source>
    </source>
</evidence>
<evidence type="ECO:0000305" key="7"/>
<evidence type="ECO:0007829" key="8">
    <source>
        <dbReference type="PDB" id="4HWF"/>
    </source>
</evidence>